<feature type="chain" id="PRO_0000228688" description="N-lysine methyltransferase KMT5A">
    <location>
        <begin position="1"/>
        <end position="352"/>
    </location>
</feature>
<feature type="domain" description="SET" evidence="2">
    <location>
        <begin position="216"/>
        <end position="337"/>
    </location>
</feature>
<feature type="region of interest" description="Disordered" evidence="4">
    <location>
        <begin position="21"/>
        <end position="51"/>
    </location>
</feature>
<feature type="region of interest" description="Disordered" evidence="4">
    <location>
        <begin position="87"/>
        <end position="202"/>
    </location>
</feature>
<feature type="compositionally biased region" description="Basic and acidic residues" evidence="4">
    <location>
        <begin position="109"/>
        <end position="121"/>
    </location>
</feature>
<feature type="compositionally biased region" description="Basic residues" evidence="4">
    <location>
        <begin position="156"/>
        <end position="172"/>
    </location>
</feature>
<feature type="binding site" evidence="3">
    <location>
        <begin position="226"/>
        <end position="228"/>
    </location>
    <ligand>
        <name>S-adenosyl-L-methionine</name>
        <dbReference type="ChEBI" id="CHEBI:59789"/>
    </ligand>
</feature>
<feature type="binding site" evidence="2 3">
    <location>
        <position position="271"/>
    </location>
    <ligand>
        <name>S-adenosyl-L-methionine</name>
        <dbReference type="ChEBI" id="CHEBI:59789"/>
    </ligand>
</feature>
<feature type="binding site" evidence="3">
    <location>
        <begin position="298"/>
        <end position="299"/>
    </location>
    <ligand>
        <name>S-adenosyl-L-methionine</name>
        <dbReference type="ChEBI" id="CHEBI:59789"/>
    </ligand>
</feature>
<feature type="modified residue" description="Phosphoserine" evidence="1">
    <location>
        <position position="59"/>
    </location>
</feature>
<feature type="modified residue" description="Phosphothreonine" evidence="1">
    <location>
        <position position="140"/>
    </location>
</feature>
<reference key="1">
    <citation type="submission" date="2005-11" db="EMBL/GenBank/DDBJ databases">
        <authorList>
            <consortium name="NIH - Mammalian Gene Collection (MGC) project"/>
        </authorList>
    </citation>
    <scope>NUCLEOTIDE SEQUENCE [LARGE SCALE MRNA]</scope>
    <source>
        <strain>Crossbred X Angus</strain>
        <tissue>Liver</tissue>
    </source>
</reference>
<gene>
    <name evidence="1" type="primary">KMT5A</name>
    <name type="synonym">SETD8</name>
</gene>
<protein>
    <recommendedName>
        <fullName evidence="5">N-lysine methyltransferase KMT5A</fullName>
        <ecNumber evidence="1">2.1.1.-</ecNumber>
    </recommendedName>
    <alternativeName>
        <fullName>H4-K20-HMTase KMT5A</fullName>
    </alternativeName>
    <alternativeName>
        <fullName>Histone-lysine N-methyltransferase KMT5A</fullName>
        <ecNumber evidence="1">2.1.1.361</ecNumber>
    </alternativeName>
    <alternativeName>
        <fullName evidence="1">Lysine-specific methylase 5A</fullName>
    </alternativeName>
    <alternativeName>
        <fullName>PR/SET domain-containing protein 07</fullName>
        <shortName>PR-Set7</shortName>
        <shortName>PR/SET07</shortName>
    </alternativeName>
    <alternativeName>
        <fullName>SET domain-containing protein 8</fullName>
    </alternativeName>
</protein>
<proteinExistence type="evidence at transcript level"/>
<sequence>MARGRKMSKPRAVEAAAAAAAVAATAPGPEMVERRGPGRPRTNGENVFTGQSKIYTYMSPNKCSGMRSPLQEENSVAQYEVKCQGKPLAGIYRKRDEKRNSGNAIRSSMKAEEQKIKDARRGPLAPFPNQKSEAAEPPKTPTSSCDTPNAAAAKQGLKKPVRGKQAPRKKAQGKTQQNRKLTDFYPVRRSSRKSKAELQSEERKRIDELIESGKEEGMKIDLIDGKGRGVIATKQFSRGEFVVEYHGDLIEITDAKKREALYAQDPSTGCYMYYFQYLSKTYCVDATRETNRLGRLINHSKCGNCQTKLHDIDGVPHLILIASRDIEAGEELLYDYGDRSRASIEAYPWLKH</sequence>
<accession>Q2YDJ8</accession>
<keyword id="KW-0131">Cell cycle</keyword>
<keyword id="KW-0132">Cell division</keyword>
<keyword id="KW-0156">Chromatin regulator</keyword>
<keyword id="KW-0158">Chromosome</keyword>
<keyword id="KW-0489">Methyltransferase</keyword>
<keyword id="KW-0498">Mitosis</keyword>
<keyword id="KW-0539">Nucleus</keyword>
<keyword id="KW-0597">Phosphoprotein</keyword>
<keyword id="KW-1185">Reference proteome</keyword>
<keyword id="KW-0678">Repressor</keyword>
<keyword id="KW-0949">S-adenosyl-L-methionine</keyword>
<keyword id="KW-0804">Transcription</keyword>
<keyword id="KW-0805">Transcription regulation</keyword>
<keyword id="KW-0808">Transferase</keyword>
<keyword id="KW-0832">Ubl conjugation</keyword>
<evidence type="ECO:0000250" key="1">
    <source>
        <dbReference type="UniProtKB" id="Q9NQR1"/>
    </source>
</evidence>
<evidence type="ECO:0000255" key="2">
    <source>
        <dbReference type="PROSITE-ProRule" id="PRU00190"/>
    </source>
</evidence>
<evidence type="ECO:0000255" key="3">
    <source>
        <dbReference type="PROSITE-ProRule" id="PRU00904"/>
    </source>
</evidence>
<evidence type="ECO:0000256" key="4">
    <source>
        <dbReference type="SAM" id="MobiDB-lite"/>
    </source>
</evidence>
<evidence type="ECO:0000305" key="5"/>
<organism>
    <name type="scientific">Bos taurus</name>
    <name type="common">Bovine</name>
    <dbReference type="NCBI Taxonomy" id="9913"/>
    <lineage>
        <taxon>Eukaryota</taxon>
        <taxon>Metazoa</taxon>
        <taxon>Chordata</taxon>
        <taxon>Craniata</taxon>
        <taxon>Vertebrata</taxon>
        <taxon>Euteleostomi</taxon>
        <taxon>Mammalia</taxon>
        <taxon>Eutheria</taxon>
        <taxon>Laurasiatheria</taxon>
        <taxon>Artiodactyla</taxon>
        <taxon>Ruminantia</taxon>
        <taxon>Pecora</taxon>
        <taxon>Bovidae</taxon>
        <taxon>Bovinae</taxon>
        <taxon>Bos</taxon>
    </lineage>
</organism>
<name>KMT5A_BOVIN</name>
<comment type="function">
    <text evidence="1">Protein-lysine N-methyltransferase that monomethylates both histones and non-histone proteins. Specifically monomethylates 'Lys-20' of histone H4 (H4K20me1). H4K20me1 is enriched during mitosis and represents a specific tag for epigenetic transcriptional repression. Mainly functions in euchromatin regions, thereby playing a central role in the silencing of euchromatic genes. Required for cell proliferation, probably by contributing to the maintenance of proper higher-order structure of DNA during mitosis. Involved in chromosome condensation and proper cytokinesis. Nucleosomes are preferred as substrate compared to free histones. Mediates monomethylation of p53/TP53 at 'Lys-382', leading to repress p53/TP53-target genes. Plays a negative role in TGF-beta response regulation and a positive role in cell migration.</text>
</comment>
<comment type="catalytic activity">
    <reaction evidence="1 3">
        <text>L-lysyl(20)-[histone H4] + S-adenosyl-L-methionine = N(6)-methyl-L-lysyl(20)-[histone H4] + S-adenosyl-L-homocysteine + H(+)</text>
        <dbReference type="Rhea" id="RHEA:60344"/>
        <dbReference type="Rhea" id="RHEA-COMP:15554"/>
        <dbReference type="Rhea" id="RHEA-COMP:15555"/>
        <dbReference type="ChEBI" id="CHEBI:15378"/>
        <dbReference type="ChEBI" id="CHEBI:29969"/>
        <dbReference type="ChEBI" id="CHEBI:57856"/>
        <dbReference type="ChEBI" id="CHEBI:59789"/>
        <dbReference type="ChEBI" id="CHEBI:61929"/>
        <dbReference type="EC" id="2.1.1.361"/>
    </reaction>
</comment>
<comment type="catalytic activity">
    <reaction evidence="1">
        <text>L-lysyl-[protein] + S-adenosyl-L-methionine = N(6)-methyl-L-lysyl-[protein] + S-adenosyl-L-homocysteine + H(+)</text>
        <dbReference type="Rhea" id="RHEA:51736"/>
        <dbReference type="Rhea" id="RHEA-COMP:9752"/>
        <dbReference type="Rhea" id="RHEA-COMP:13053"/>
        <dbReference type="ChEBI" id="CHEBI:15378"/>
        <dbReference type="ChEBI" id="CHEBI:29969"/>
        <dbReference type="ChEBI" id="CHEBI:57856"/>
        <dbReference type="ChEBI" id="CHEBI:59789"/>
        <dbReference type="ChEBI" id="CHEBI:61929"/>
    </reaction>
</comment>
<comment type="subunit">
    <text evidence="1">Interacts with L3MBTL1. Interacts with SIRT2 (phosphorylated form); the interaction is direct, stimulates KMT5A-mediated methyltransferase activity at histone H4 'Lys-20' (H4K20me1) and is increased in a H(2)O(2)-induced oxidative stress-dependent manner (By similarity).</text>
</comment>
<comment type="subcellular location">
    <subcellularLocation>
        <location evidence="1">Nucleus</location>
    </subcellularLocation>
    <subcellularLocation>
        <location evidence="1">Chromosome</location>
    </subcellularLocation>
    <text evidence="1">Specifically localizes to mitotic chromosomes. Associates with silent chromatin on euchromatic arms. Colocalized with SIRT2 at mitotic foci. Associates with chromosomes during mitosis; association is increased in a H(2)O(2)-induced oxidative stress-dependent manner. Not associated with constitutive heterochromatin (By similarity).</text>
</comment>
<comment type="domain">
    <text evidence="1">Although the SET domain contains the active site of enzymatic activity, both sequences upstream and downstream of the SET domain are required for methyltransferase activity.</text>
</comment>
<comment type="PTM">
    <text evidence="5">Ubiquitinated and degraded by the DCX(DTL) complex.</text>
</comment>
<comment type="similarity">
    <text evidence="3">Belongs to the class V-like SAM-binding methyltransferase superfamily. Histone-lysine methyltransferase family. PR/SET subfamily.</text>
</comment>
<dbReference type="EC" id="2.1.1.-" evidence="1"/>
<dbReference type="EC" id="2.1.1.361" evidence="1"/>
<dbReference type="EMBL" id="BC110189">
    <property type="protein sequence ID" value="AAI10190.1"/>
    <property type="molecule type" value="mRNA"/>
</dbReference>
<dbReference type="RefSeq" id="NP_001039795.1">
    <property type="nucleotide sequence ID" value="NM_001046330.1"/>
</dbReference>
<dbReference type="SMR" id="Q2YDJ8"/>
<dbReference type="FunCoup" id="Q2YDJ8">
    <property type="interactions" value="376"/>
</dbReference>
<dbReference type="STRING" id="9913.ENSBTAP00000055591"/>
<dbReference type="PaxDb" id="9913-ENSBTAP00000055591"/>
<dbReference type="Ensembl" id="ENSBTAT00000000160.7">
    <property type="protein sequence ID" value="ENSBTAP00000000160.7"/>
    <property type="gene ID" value="ENSBTAG00000000139.7"/>
</dbReference>
<dbReference type="GeneID" id="532622"/>
<dbReference type="KEGG" id="bta:532622"/>
<dbReference type="CTD" id="387893"/>
<dbReference type="VEuPathDB" id="HostDB:ENSBTAG00000000139"/>
<dbReference type="VGNC" id="VGNC:53910">
    <property type="gene designation" value="KMT5A"/>
</dbReference>
<dbReference type="eggNOG" id="KOG1085">
    <property type="taxonomic scope" value="Eukaryota"/>
</dbReference>
<dbReference type="GeneTree" id="ENSGT00940000160030"/>
<dbReference type="InParanoid" id="Q2YDJ8"/>
<dbReference type="OMA" id="NIFTCQS"/>
<dbReference type="OrthoDB" id="5560686at2759"/>
<dbReference type="Reactome" id="R-BTA-2299718">
    <property type="pathway name" value="Condensation of Prophase Chromosomes"/>
</dbReference>
<dbReference type="Reactome" id="R-BTA-3214841">
    <property type="pathway name" value="PKMTs methylate histone lysines"/>
</dbReference>
<dbReference type="Reactome" id="R-BTA-6804760">
    <property type="pathway name" value="Regulation of TP53 Activity through Methylation"/>
</dbReference>
<dbReference type="Proteomes" id="UP000009136">
    <property type="component" value="Chromosome 17"/>
</dbReference>
<dbReference type="Bgee" id="ENSBTAG00000000139">
    <property type="expression patterns" value="Expressed in trachea and 102 other cell types or tissues"/>
</dbReference>
<dbReference type="GO" id="GO:0005634">
    <property type="term" value="C:nucleus"/>
    <property type="evidence" value="ECO:0000318"/>
    <property type="project" value="GO_Central"/>
</dbReference>
<dbReference type="GO" id="GO:0005700">
    <property type="term" value="C:polytene chromosome"/>
    <property type="evidence" value="ECO:0000318"/>
    <property type="project" value="GO_Central"/>
</dbReference>
<dbReference type="GO" id="GO:0042799">
    <property type="term" value="F:histone H4K20 methyltransferase activity"/>
    <property type="evidence" value="ECO:0000318"/>
    <property type="project" value="GO_Central"/>
</dbReference>
<dbReference type="GO" id="GO:0140944">
    <property type="term" value="F:histone H4K20 monomethyltransferase activity"/>
    <property type="evidence" value="ECO:0007669"/>
    <property type="project" value="UniProtKB-EC"/>
</dbReference>
<dbReference type="GO" id="GO:0042054">
    <property type="term" value="F:histone methyltransferase activity"/>
    <property type="evidence" value="ECO:0000250"/>
    <property type="project" value="UniProtKB"/>
</dbReference>
<dbReference type="GO" id="GO:0016279">
    <property type="term" value="F:protein-lysine N-methyltransferase activity"/>
    <property type="evidence" value="ECO:0000250"/>
    <property type="project" value="UniProtKB"/>
</dbReference>
<dbReference type="GO" id="GO:0051301">
    <property type="term" value="P:cell division"/>
    <property type="evidence" value="ECO:0007669"/>
    <property type="project" value="UniProtKB-KW"/>
</dbReference>
<dbReference type="GO" id="GO:0000122">
    <property type="term" value="P:negative regulation of transcription by RNA polymerase II"/>
    <property type="evidence" value="ECO:0000250"/>
    <property type="project" value="UniProtKB"/>
</dbReference>
<dbReference type="GO" id="GO:0018026">
    <property type="term" value="P:peptidyl-lysine monomethylation"/>
    <property type="evidence" value="ECO:0000250"/>
    <property type="project" value="UniProtKB"/>
</dbReference>
<dbReference type="GO" id="GO:0043516">
    <property type="term" value="P:regulation of DNA damage response, signal transduction by p53 class mediator"/>
    <property type="evidence" value="ECO:0000250"/>
    <property type="project" value="UniProtKB"/>
</dbReference>
<dbReference type="GO" id="GO:0006357">
    <property type="term" value="P:regulation of transcription by RNA polymerase II"/>
    <property type="evidence" value="ECO:0000318"/>
    <property type="project" value="GO_Central"/>
</dbReference>
<dbReference type="CDD" id="cd10528">
    <property type="entry name" value="SET_SETD8"/>
    <property type="match status" value="1"/>
</dbReference>
<dbReference type="FunFam" id="2.170.270.10:FF:000021">
    <property type="entry name" value="Histone-lysine N-methyltransferase"/>
    <property type="match status" value="1"/>
</dbReference>
<dbReference type="Gene3D" id="2.170.270.10">
    <property type="entry name" value="SET domain"/>
    <property type="match status" value="1"/>
</dbReference>
<dbReference type="InterPro" id="IPR051760">
    <property type="entry name" value="KMT5A"/>
</dbReference>
<dbReference type="InterPro" id="IPR016858">
    <property type="entry name" value="KMT5A-like"/>
</dbReference>
<dbReference type="InterPro" id="IPR047266">
    <property type="entry name" value="KMT5A-like_SET"/>
</dbReference>
<dbReference type="InterPro" id="IPR001214">
    <property type="entry name" value="SET_dom"/>
</dbReference>
<dbReference type="InterPro" id="IPR046341">
    <property type="entry name" value="SET_dom_sf"/>
</dbReference>
<dbReference type="PANTHER" id="PTHR46167">
    <property type="entry name" value="N-LYSINE METHYLTRANSFERASE KMT5A"/>
    <property type="match status" value="1"/>
</dbReference>
<dbReference type="PANTHER" id="PTHR46167:SF1">
    <property type="entry name" value="N-LYSINE METHYLTRANSFERASE KMT5A"/>
    <property type="match status" value="1"/>
</dbReference>
<dbReference type="Pfam" id="PF00856">
    <property type="entry name" value="SET"/>
    <property type="match status" value="1"/>
</dbReference>
<dbReference type="PIRSF" id="PIRSF027717">
    <property type="entry name" value="Histone_H4-K20_mtfrase"/>
    <property type="match status" value="1"/>
</dbReference>
<dbReference type="SMART" id="SM00317">
    <property type="entry name" value="SET"/>
    <property type="match status" value="1"/>
</dbReference>
<dbReference type="SUPFAM" id="SSF82199">
    <property type="entry name" value="SET domain"/>
    <property type="match status" value="1"/>
</dbReference>
<dbReference type="PROSITE" id="PS51571">
    <property type="entry name" value="SAM_MT43_PR_SET"/>
    <property type="match status" value="1"/>
</dbReference>
<dbReference type="PROSITE" id="PS50280">
    <property type="entry name" value="SET"/>
    <property type="match status" value="1"/>
</dbReference>